<dbReference type="EMBL" id="CR522870">
    <property type="protein sequence ID" value="CAG36412.1"/>
    <property type="status" value="ALT_INIT"/>
    <property type="molecule type" value="Genomic_DNA"/>
</dbReference>
<dbReference type="RefSeq" id="WP_041277812.1">
    <property type="nucleotide sequence ID" value="NC_006138.1"/>
</dbReference>
<dbReference type="SMR" id="Q6AML3"/>
<dbReference type="STRING" id="177439.DP1683"/>
<dbReference type="KEGG" id="dps:DP1683"/>
<dbReference type="eggNOG" id="COG0227">
    <property type="taxonomic scope" value="Bacteria"/>
</dbReference>
<dbReference type="HOGENOM" id="CLU_064548_7_0_7"/>
<dbReference type="OrthoDB" id="9805609at2"/>
<dbReference type="Proteomes" id="UP000000602">
    <property type="component" value="Chromosome"/>
</dbReference>
<dbReference type="GO" id="GO:1990904">
    <property type="term" value="C:ribonucleoprotein complex"/>
    <property type="evidence" value="ECO:0007669"/>
    <property type="project" value="UniProtKB-KW"/>
</dbReference>
<dbReference type="GO" id="GO:0005840">
    <property type="term" value="C:ribosome"/>
    <property type="evidence" value="ECO:0007669"/>
    <property type="project" value="UniProtKB-KW"/>
</dbReference>
<dbReference type="GO" id="GO:0003735">
    <property type="term" value="F:structural constituent of ribosome"/>
    <property type="evidence" value="ECO:0007669"/>
    <property type="project" value="InterPro"/>
</dbReference>
<dbReference type="GO" id="GO:0006412">
    <property type="term" value="P:translation"/>
    <property type="evidence" value="ECO:0007669"/>
    <property type="project" value="UniProtKB-UniRule"/>
</dbReference>
<dbReference type="Gene3D" id="2.20.150.30">
    <property type="match status" value="1"/>
</dbReference>
<dbReference type="Gene3D" id="2.30.170.40">
    <property type="entry name" value="Ribosomal protein L28/L24"/>
    <property type="match status" value="1"/>
</dbReference>
<dbReference type="HAMAP" id="MF_00373">
    <property type="entry name" value="Ribosomal_bL28"/>
    <property type="match status" value="1"/>
</dbReference>
<dbReference type="InterPro" id="IPR050096">
    <property type="entry name" value="Bacterial_rp_bL28"/>
</dbReference>
<dbReference type="InterPro" id="IPR026569">
    <property type="entry name" value="Ribosomal_bL28"/>
</dbReference>
<dbReference type="InterPro" id="IPR034704">
    <property type="entry name" value="Ribosomal_bL28/bL31-like_sf"/>
</dbReference>
<dbReference type="InterPro" id="IPR001383">
    <property type="entry name" value="Ribosomal_bL28_bact-type"/>
</dbReference>
<dbReference type="InterPro" id="IPR037147">
    <property type="entry name" value="Ribosomal_bL28_sf"/>
</dbReference>
<dbReference type="NCBIfam" id="TIGR00009">
    <property type="entry name" value="L28"/>
    <property type="match status" value="1"/>
</dbReference>
<dbReference type="PANTHER" id="PTHR39080">
    <property type="entry name" value="50S RIBOSOMAL PROTEIN L28"/>
    <property type="match status" value="1"/>
</dbReference>
<dbReference type="PANTHER" id="PTHR39080:SF1">
    <property type="entry name" value="LARGE RIBOSOMAL SUBUNIT PROTEIN BL28A"/>
    <property type="match status" value="1"/>
</dbReference>
<dbReference type="Pfam" id="PF00830">
    <property type="entry name" value="Ribosomal_L28"/>
    <property type="match status" value="1"/>
</dbReference>
<dbReference type="SUPFAM" id="SSF143800">
    <property type="entry name" value="L28p-like"/>
    <property type="match status" value="1"/>
</dbReference>
<organism>
    <name type="scientific">Desulfotalea psychrophila (strain LSv54 / DSM 12343)</name>
    <dbReference type="NCBI Taxonomy" id="177439"/>
    <lineage>
        <taxon>Bacteria</taxon>
        <taxon>Pseudomonadati</taxon>
        <taxon>Thermodesulfobacteriota</taxon>
        <taxon>Desulfobulbia</taxon>
        <taxon>Desulfobulbales</taxon>
        <taxon>Desulfocapsaceae</taxon>
        <taxon>Desulfotalea</taxon>
    </lineage>
</organism>
<proteinExistence type="inferred from homology"/>
<feature type="chain" id="PRO_0000178466" description="Large ribosomal subunit protein bL28">
    <location>
        <begin position="1"/>
        <end position="64"/>
    </location>
</feature>
<name>RL28_DESPS</name>
<reference key="1">
    <citation type="journal article" date="2004" name="Environ. Microbiol.">
        <title>The genome of Desulfotalea psychrophila, a sulfate-reducing bacterium from permanently cold Arctic sediments.</title>
        <authorList>
            <person name="Rabus R."/>
            <person name="Ruepp A."/>
            <person name="Frickey T."/>
            <person name="Rattei T."/>
            <person name="Fartmann B."/>
            <person name="Stark M."/>
            <person name="Bauer M."/>
            <person name="Zibat A."/>
            <person name="Lombardot T."/>
            <person name="Becker I."/>
            <person name="Amann J."/>
            <person name="Gellner K."/>
            <person name="Teeling H."/>
            <person name="Leuschner W.D."/>
            <person name="Gloeckner F.-O."/>
            <person name="Lupas A.N."/>
            <person name="Amann R."/>
            <person name="Klenk H.-P."/>
        </authorList>
    </citation>
    <scope>NUCLEOTIDE SEQUENCE [LARGE SCALE GENOMIC DNA]</scope>
    <source>
        <strain>DSM 12343 / LSv54</strain>
    </source>
</reference>
<keyword id="KW-1185">Reference proteome</keyword>
<keyword id="KW-0687">Ribonucleoprotein</keyword>
<keyword id="KW-0689">Ribosomal protein</keyword>
<comment type="similarity">
    <text evidence="1">Belongs to the bacterial ribosomal protein bL28 family.</text>
</comment>
<comment type="sequence caution" evidence="2">
    <conflict type="erroneous initiation">
        <sequence resource="EMBL-CDS" id="CAG36412"/>
    </conflict>
</comment>
<evidence type="ECO:0000255" key="1">
    <source>
        <dbReference type="HAMAP-Rule" id="MF_00373"/>
    </source>
</evidence>
<evidence type="ECO:0000305" key="2"/>
<sequence length="64" mass="6915">MAKVCEICGKGPITGNNVSHAHNKTRRRWLPNLKKVRMVTASGATVRGKVCTRCIRSGAVVKPA</sequence>
<accession>Q6AML3</accession>
<protein>
    <recommendedName>
        <fullName evidence="1">Large ribosomal subunit protein bL28</fullName>
    </recommendedName>
    <alternativeName>
        <fullName evidence="2">50S ribosomal protein L28</fullName>
    </alternativeName>
</protein>
<gene>
    <name evidence="1" type="primary">rpmB</name>
    <name type="ordered locus">DP1683</name>
</gene>